<sequence>MPLTYRSTLTQFLIEERRRFPNASGDFNALILDVALACRAIARAVALGELGGAMGNHAAETGGSVNVQGETQKKLDVLSNEVFIRRTEWAGNLAGMASEEMELPYQIPQQYPRGKYMLVFDPLDGSSNIDVNVCVGSIFSVLRAPQDALDSGRDLNEADFLQAGRQQVAAGYAVYGPSTLLVLTVGNGVNGFTLDPNLGEFMLTHPKMQIPPETHEFAINASNSRFWQAPVKRYVDECLAGQTGPRGKDFNMRWIASMVAEAHRILMRGGVFMYPRDNKDPAKPGRLRLLYEANPVGMLMEQAGGRASTGELPMLDVQPTSLHQRIGLVFGSKNEVERIERYHAEPVQAEPSNPLFAERSLFRS</sequence>
<evidence type="ECO:0000255" key="1">
    <source>
        <dbReference type="HAMAP-Rule" id="MF_01855"/>
    </source>
</evidence>
<dbReference type="EC" id="3.1.3.11" evidence="1"/>
<dbReference type="EMBL" id="CP000267">
    <property type="protein sequence ID" value="ABD69126.1"/>
    <property type="molecule type" value="Genomic_DNA"/>
</dbReference>
<dbReference type="RefSeq" id="WP_011463694.1">
    <property type="nucleotide sequence ID" value="NC_007908.1"/>
</dbReference>
<dbReference type="SMR" id="Q21YM7"/>
<dbReference type="STRING" id="338969.Rfer_1393"/>
<dbReference type="KEGG" id="rfr:Rfer_1393"/>
<dbReference type="eggNOG" id="COG0158">
    <property type="taxonomic scope" value="Bacteria"/>
</dbReference>
<dbReference type="HOGENOM" id="CLU_039977_0_0_4"/>
<dbReference type="OrthoDB" id="9806756at2"/>
<dbReference type="UniPathway" id="UPA00138"/>
<dbReference type="Proteomes" id="UP000008332">
    <property type="component" value="Chromosome"/>
</dbReference>
<dbReference type="GO" id="GO:0005829">
    <property type="term" value="C:cytosol"/>
    <property type="evidence" value="ECO:0007669"/>
    <property type="project" value="TreeGrafter"/>
</dbReference>
<dbReference type="GO" id="GO:0042132">
    <property type="term" value="F:fructose 1,6-bisphosphate 1-phosphatase activity"/>
    <property type="evidence" value="ECO:0007669"/>
    <property type="project" value="UniProtKB-UniRule"/>
</dbReference>
<dbReference type="GO" id="GO:0000287">
    <property type="term" value="F:magnesium ion binding"/>
    <property type="evidence" value="ECO:0007669"/>
    <property type="project" value="UniProtKB-UniRule"/>
</dbReference>
<dbReference type="GO" id="GO:0030388">
    <property type="term" value="P:fructose 1,6-bisphosphate metabolic process"/>
    <property type="evidence" value="ECO:0007669"/>
    <property type="project" value="TreeGrafter"/>
</dbReference>
<dbReference type="GO" id="GO:0006002">
    <property type="term" value="P:fructose 6-phosphate metabolic process"/>
    <property type="evidence" value="ECO:0007669"/>
    <property type="project" value="TreeGrafter"/>
</dbReference>
<dbReference type="GO" id="GO:0006000">
    <property type="term" value="P:fructose metabolic process"/>
    <property type="evidence" value="ECO:0007669"/>
    <property type="project" value="TreeGrafter"/>
</dbReference>
<dbReference type="GO" id="GO:0006094">
    <property type="term" value="P:gluconeogenesis"/>
    <property type="evidence" value="ECO:0007669"/>
    <property type="project" value="UniProtKB-UniRule"/>
</dbReference>
<dbReference type="GO" id="GO:0005986">
    <property type="term" value="P:sucrose biosynthetic process"/>
    <property type="evidence" value="ECO:0007669"/>
    <property type="project" value="TreeGrafter"/>
</dbReference>
<dbReference type="CDD" id="cd00354">
    <property type="entry name" value="FBPase"/>
    <property type="match status" value="1"/>
</dbReference>
<dbReference type="FunFam" id="3.30.540.10:FF:000002">
    <property type="entry name" value="Fructose-1,6-bisphosphatase class 1"/>
    <property type="match status" value="1"/>
</dbReference>
<dbReference type="FunFam" id="3.40.190.80:FF:000011">
    <property type="entry name" value="Fructose-1,6-bisphosphatase class 1"/>
    <property type="match status" value="1"/>
</dbReference>
<dbReference type="Gene3D" id="3.40.190.80">
    <property type="match status" value="1"/>
</dbReference>
<dbReference type="Gene3D" id="3.30.540.10">
    <property type="entry name" value="Fructose-1,6-Bisphosphatase, subunit A, domain 1"/>
    <property type="match status" value="1"/>
</dbReference>
<dbReference type="HAMAP" id="MF_01855">
    <property type="entry name" value="FBPase_class1"/>
    <property type="match status" value="1"/>
</dbReference>
<dbReference type="InterPro" id="IPR044015">
    <property type="entry name" value="FBPase_C_dom"/>
</dbReference>
<dbReference type="InterPro" id="IPR000146">
    <property type="entry name" value="FBPase_class-1"/>
</dbReference>
<dbReference type="InterPro" id="IPR033391">
    <property type="entry name" value="FBPase_N"/>
</dbReference>
<dbReference type="InterPro" id="IPR028343">
    <property type="entry name" value="FBPtase"/>
</dbReference>
<dbReference type="InterPro" id="IPR020548">
    <property type="entry name" value="Fructose_bisphosphatase_AS"/>
</dbReference>
<dbReference type="NCBIfam" id="NF006778">
    <property type="entry name" value="PRK09293.1-1"/>
    <property type="match status" value="1"/>
</dbReference>
<dbReference type="NCBIfam" id="NF006779">
    <property type="entry name" value="PRK09293.1-3"/>
    <property type="match status" value="1"/>
</dbReference>
<dbReference type="NCBIfam" id="NF006780">
    <property type="entry name" value="PRK09293.1-4"/>
    <property type="match status" value="1"/>
</dbReference>
<dbReference type="PANTHER" id="PTHR11556">
    <property type="entry name" value="FRUCTOSE-1,6-BISPHOSPHATASE-RELATED"/>
    <property type="match status" value="1"/>
</dbReference>
<dbReference type="PANTHER" id="PTHR11556:SF35">
    <property type="entry name" value="SEDOHEPTULOSE-1,7-BISPHOSPHATASE, CHLOROPLASTIC"/>
    <property type="match status" value="1"/>
</dbReference>
<dbReference type="Pfam" id="PF00316">
    <property type="entry name" value="FBPase"/>
    <property type="match status" value="1"/>
</dbReference>
<dbReference type="Pfam" id="PF18913">
    <property type="entry name" value="FBPase_C"/>
    <property type="match status" value="1"/>
</dbReference>
<dbReference type="PIRSF" id="PIRSF500210">
    <property type="entry name" value="FBPtase"/>
    <property type="match status" value="1"/>
</dbReference>
<dbReference type="PIRSF" id="PIRSF000904">
    <property type="entry name" value="FBPtase_SBPase"/>
    <property type="match status" value="1"/>
</dbReference>
<dbReference type="PRINTS" id="PR00115">
    <property type="entry name" value="F16BPHPHTASE"/>
</dbReference>
<dbReference type="SUPFAM" id="SSF56655">
    <property type="entry name" value="Carbohydrate phosphatase"/>
    <property type="match status" value="1"/>
</dbReference>
<dbReference type="PROSITE" id="PS00124">
    <property type="entry name" value="FBPASE"/>
    <property type="match status" value="1"/>
</dbReference>
<proteinExistence type="inferred from homology"/>
<accession>Q21YM7</accession>
<name>F16A1_ALBFT</name>
<keyword id="KW-0119">Carbohydrate metabolism</keyword>
<keyword id="KW-0963">Cytoplasm</keyword>
<keyword id="KW-0378">Hydrolase</keyword>
<keyword id="KW-0460">Magnesium</keyword>
<keyword id="KW-0479">Metal-binding</keyword>
<keyword id="KW-1185">Reference proteome</keyword>
<comment type="catalytic activity">
    <reaction evidence="1">
        <text>beta-D-fructose 1,6-bisphosphate + H2O = beta-D-fructose 6-phosphate + phosphate</text>
        <dbReference type="Rhea" id="RHEA:11064"/>
        <dbReference type="ChEBI" id="CHEBI:15377"/>
        <dbReference type="ChEBI" id="CHEBI:32966"/>
        <dbReference type="ChEBI" id="CHEBI:43474"/>
        <dbReference type="ChEBI" id="CHEBI:57634"/>
        <dbReference type="EC" id="3.1.3.11"/>
    </reaction>
</comment>
<comment type="cofactor">
    <cofactor evidence="1">
        <name>Mg(2+)</name>
        <dbReference type="ChEBI" id="CHEBI:18420"/>
    </cofactor>
    <text evidence="1">Binds 2 magnesium ions per subunit.</text>
</comment>
<comment type="pathway">
    <text evidence="1">Carbohydrate biosynthesis; gluconeogenesis.</text>
</comment>
<comment type="subunit">
    <text evidence="1">Homotetramer.</text>
</comment>
<comment type="subcellular location">
    <subcellularLocation>
        <location evidence="1">Cytoplasm</location>
    </subcellularLocation>
</comment>
<comment type="similarity">
    <text evidence="1">Belongs to the FBPase class 1 family.</text>
</comment>
<organism>
    <name type="scientific">Albidiferax ferrireducens (strain ATCC BAA-621 / DSM 15236 / T118)</name>
    <name type="common">Rhodoferax ferrireducens</name>
    <dbReference type="NCBI Taxonomy" id="338969"/>
    <lineage>
        <taxon>Bacteria</taxon>
        <taxon>Pseudomonadati</taxon>
        <taxon>Pseudomonadota</taxon>
        <taxon>Betaproteobacteria</taxon>
        <taxon>Burkholderiales</taxon>
        <taxon>Comamonadaceae</taxon>
        <taxon>Rhodoferax</taxon>
    </lineage>
</organism>
<feature type="chain" id="PRO_0000364672" description="Fructose-1,6-bisphosphatase class 1 1">
    <location>
        <begin position="1"/>
        <end position="364"/>
    </location>
</feature>
<feature type="binding site" evidence="1">
    <location>
        <position position="99"/>
    </location>
    <ligand>
        <name>Mg(2+)</name>
        <dbReference type="ChEBI" id="CHEBI:18420"/>
        <label>1</label>
    </ligand>
</feature>
<feature type="binding site" evidence="1">
    <location>
        <position position="121"/>
    </location>
    <ligand>
        <name>Mg(2+)</name>
        <dbReference type="ChEBI" id="CHEBI:18420"/>
        <label>1</label>
    </ligand>
</feature>
<feature type="binding site" evidence="1">
    <location>
        <position position="121"/>
    </location>
    <ligand>
        <name>Mg(2+)</name>
        <dbReference type="ChEBI" id="CHEBI:18420"/>
        <label>2</label>
    </ligand>
</feature>
<feature type="binding site" evidence="1">
    <location>
        <position position="123"/>
    </location>
    <ligand>
        <name>Mg(2+)</name>
        <dbReference type="ChEBI" id="CHEBI:18420"/>
        <label>1</label>
    </ligand>
</feature>
<feature type="binding site" evidence="1">
    <location>
        <begin position="124"/>
        <end position="127"/>
    </location>
    <ligand>
        <name>substrate</name>
    </ligand>
</feature>
<feature type="binding site" evidence="1">
    <location>
        <position position="124"/>
    </location>
    <ligand>
        <name>Mg(2+)</name>
        <dbReference type="ChEBI" id="CHEBI:18420"/>
        <label>2</label>
    </ligand>
</feature>
<feature type="binding site" evidence="1">
    <location>
        <position position="220"/>
    </location>
    <ligand>
        <name>substrate</name>
    </ligand>
</feature>
<feature type="binding site" evidence="1">
    <location>
        <position position="292"/>
    </location>
    <ligand>
        <name>Mg(2+)</name>
        <dbReference type="ChEBI" id="CHEBI:18420"/>
        <label>2</label>
    </ligand>
</feature>
<gene>
    <name evidence="1" type="primary">fbp1</name>
    <name type="ordered locus">Rfer_1393</name>
</gene>
<reference key="1">
    <citation type="submission" date="2006-02" db="EMBL/GenBank/DDBJ databases">
        <title>Complete sequence of chromosome of Rhodoferax ferrireducens DSM 15236.</title>
        <authorList>
            <person name="Copeland A."/>
            <person name="Lucas S."/>
            <person name="Lapidus A."/>
            <person name="Barry K."/>
            <person name="Detter J.C."/>
            <person name="Glavina del Rio T."/>
            <person name="Hammon N."/>
            <person name="Israni S."/>
            <person name="Pitluck S."/>
            <person name="Brettin T."/>
            <person name="Bruce D."/>
            <person name="Han C."/>
            <person name="Tapia R."/>
            <person name="Gilna P."/>
            <person name="Kiss H."/>
            <person name="Schmutz J."/>
            <person name="Larimer F."/>
            <person name="Land M."/>
            <person name="Kyrpides N."/>
            <person name="Ivanova N."/>
            <person name="Richardson P."/>
        </authorList>
    </citation>
    <scope>NUCLEOTIDE SEQUENCE [LARGE SCALE GENOMIC DNA]</scope>
    <source>
        <strain>ATCC BAA-621 / DSM 15236 / T118</strain>
    </source>
</reference>
<protein>
    <recommendedName>
        <fullName evidence="1">Fructose-1,6-bisphosphatase class 1 1</fullName>
        <shortName evidence="1">FBPase class 1 1</shortName>
        <ecNumber evidence="1">3.1.3.11</ecNumber>
    </recommendedName>
    <alternativeName>
        <fullName evidence="1">D-fructose-1,6-bisphosphate 1-phosphohydrolase class 1 1</fullName>
    </alternativeName>
</protein>